<feature type="chain" id="PRO_1000134273" description="NADPH-dependent 7-cyano-7-deazaguanine reductase">
    <location>
        <begin position="1"/>
        <end position="274"/>
    </location>
</feature>
<feature type="active site" description="Thioimide intermediate" evidence="1">
    <location>
        <position position="181"/>
    </location>
</feature>
<feature type="active site" description="Proton donor" evidence="1">
    <location>
        <position position="188"/>
    </location>
</feature>
<feature type="binding site" evidence="1">
    <location>
        <begin position="80"/>
        <end position="82"/>
    </location>
    <ligand>
        <name>substrate</name>
    </ligand>
</feature>
<feature type="binding site" evidence="1">
    <location>
        <begin position="82"/>
        <end position="83"/>
    </location>
    <ligand>
        <name>NADPH</name>
        <dbReference type="ChEBI" id="CHEBI:57783"/>
    </ligand>
</feature>
<feature type="binding site" evidence="1">
    <location>
        <begin position="220"/>
        <end position="221"/>
    </location>
    <ligand>
        <name>substrate</name>
    </ligand>
</feature>
<feature type="binding site" evidence="1">
    <location>
        <begin position="249"/>
        <end position="250"/>
    </location>
    <ligand>
        <name>NADPH</name>
        <dbReference type="ChEBI" id="CHEBI:57783"/>
    </ligand>
</feature>
<dbReference type="EC" id="1.7.1.13" evidence="1"/>
<dbReference type="EMBL" id="CP001052">
    <property type="protein sequence ID" value="ACD15068.1"/>
    <property type="molecule type" value="Genomic_DNA"/>
</dbReference>
<dbReference type="RefSeq" id="WP_012431705.1">
    <property type="nucleotide sequence ID" value="NC_010681.1"/>
</dbReference>
<dbReference type="SMR" id="B2SX29"/>
<dbReference type="STRING" id="398527.Bphyt_0643"/>
<dbReference type="KEGG" id="bpy:Bphyt_0643"/>
<dbReference type="eggNOG" id="COG0780">
    <property type="taxonomic scope" value="Bacteria"/>
</dbReference>
<dbReference type="eggNOG" id="COG2904">
    <property type="taxonomic scope" value="Bacteria"/>
</dbReference>
<dbReference type="HOGENOM" id="CLU_054738_0_0_4"/>
<dbReference type="OrthoDB" id="9789995at2"/>
<dbReference type="UniPathway" id="UPA00392"/>
<dbReference type="Proteomes" id="UP000001739">
    <property type="component" value="Chromosome 1"/>
</dbReference>
<dbReference type="GO" id="GO:0005737">
    <property type="term" value="C:cytoplasm"/>
    <property type="evidence" value="ECO:0007669"/>
    <property type="project" value="UniProtKB-SubCell"/>
</dbReference>
<dbReference type="GO" id="GO:0033739">
    <property type="term" value="F:preQ1 synthase activity"/>
    <property type="evidence" value="ECO:0007669"/>
    <property type="project" value="UniProtKB-UniRule"/>
</dbReference>
<dbReference type="GO" id="GO:0008616">
    <property type="term" value="P:queuosine biosynthetic process"/>
    <property type="evidence" value="ECO:0007669"/>
    <property type="project" value="UniProtKB-UniRule"/>
</dbReference>
<dbReference type="GO" id="GO:0006400">
    <property type="term" value="P:tRNA modification"/>
    <property type="evidence" value="ECO:0007669"/>
    <property type="project" value="UniProtKB-UniRule"/>
</dbReference>
<dbReference type="Gene3D" id="3.30.1130.10">
    <property type="match status" value="2"/>
</dbReference>
<dbReference type="HAMAP" id="MF_00817">
    <property type="entry name" value="QueF_type2"/>
    <property type="match status" value="1"/>
</dbReference>
<dbReference type="InterPro" id="IPR043133">
    <property type="entry name" value="GTP-CH-I_C/QueF"/>
</dbReference>
<dbReference type="InterPro" id="IPR050084">
    <property type="entry name" value="NADPH_dep_7-cyano-7-deazaG_red"/>
</dbReference>
<dbReference type="InterPro" id="IPR029500">
    <property type="entry name" value="QueF"/>
</dbReference>
<dbReference type="InterPro" id="IPR029139">
    <property type="entry name" value="QueF_N"/>
</dbReference>
<dbReference type="InterPro" id="IPR016428">
    <property type="entry name" value="QueF_type2"/>
</dbReference>
<dbReference type="NCBIfam" id="TIGR03138">
    <property type="entry name" value="QueF"/>
    <property type="match status" value="1"/>
</dbReference>
<dbReference type="PANTHER" id="PTHR34354">
    <property type="entry name" value="NADPH-DEPENDENT 7-CYANO-7-DEAZAGUANINE REDUCTASE"/>
    <property type="match status" value="1"/>
</dbReference>
<dbReference type="PANTHER" id="PTHR34354:SF1">
    <property type="entry name" value="NADPH-DEPENDENT 7-CYANO-7-DEAZAGUANINE REDUCTASE"/>
    <property type="match status" value="1"/>
</dbReference>
<dbReference type="Pfam" id="PF14489">
    <property type="entry name" value="QueF"/>
    <property type="match status" value="1"/>
</dbReference>
<dbReference type="Pfam" id="PF14819">
    <property type="entry name" value="QueF_N"/>
    <property type="match status" value="1"/>
</dbReference>
<dbReference type="PIRSF" id="PIRSF004750">
    <property type="entry name" value="Nitrile_oxidored_YqcD_prd"/>
    <property type="match status" value="1"/>
</dbReference>
<dbReference type="SUPFAM" id="SSF55620">
    <property type="entry name" value="Tetrahydrobiopterin biosynthesis enzymes-like"/>
    <property type="match status" value="1"/>
</dbReference>
<comment type="function">
    <text evidence="1">Catalyzes the NADPH-dependent reduction of 7-cyano-7-deazaguanine (preQ0) to 7-aminomethyl-7-deazaguanine (preQ1).</text>
</comment>
<comment type="catalytic activity">
    <reaction evidence="1">
        <text>7-aminomethyl-7-carbaguanine + 2 NADP(+) = 7-cyano-7-deazaguanine + 2 NADPH + 3 H(+)</text>
        <dbReference type="Rhea" id="RHEA:13409"/>
        <dbReference type="ChEBI" id="CHEBI:15378"/>
        <dbReference type="ChEBI" id="CHEBI:45075"/>
        <dbReference type="ChEBI" id="CHEBI:57783"/>
        <dbReference type="ChEBI" id="CHEBI:58349"/>
        <dbReference type="ChEBI" id="CHEBI:58703"/>
        <dbReference type="EC" id="1.7.1.13"/>
    </reaction>
</comment>
<comment type="pathway">
    <text evidence="1">tRNA modification; tRNA-queuosine biosynthesis.</text>
</comment>
<comment type="subunit">
    <text evidence="1">Homodimer.</text>
</comment>
<comment type="subcellular location">
    <subcellularLocation>
        <location evidence="1">Cytoplasm</location>
    </subcellularLocation>
</comment>
<comment type="similarity">
    <text evidence="1">Belongs to the GTP cyclohydrolase I family. QueF type 2 subfamily.</text>
</comment>
<keyword id="KW-0963">Cytoplasm</keyword>
<keyword id="KW-0521">NADP</keyword>
<keyword id="KW-0560">Oxidoreductase</keyword>
<keyword id="KW-0671">Queuosine biosynthesis</keyword>
<name>QUEF_PARPJ</name>
<evidence type="ECO:0000255" key="1">
    <source>
        <dbReference type="HAMAP-Rule" id="MF_00817"/>
    </source>
</evidence>
<gene>
    <name evidence="1" type="primary">queF</name>
    <name type="ordered locus">Bphyt_0643</name>
</gene>
<reference key="1">
    <citation type="journal article" date="2011" name="J. Bacteriol.">
        <title>Complete genome sequence of the plant growth-promoting endophyte Burkholderia phytofirmans strain PsJN.</title>
        <authorList>
            <person name="Weilharter A."/>
            <person name="Mitter B."/>
            <person name="Shin M.V."/>
            <person name="Chain P.S."/>
            <person name="Nowak J."/>
            <person name="Sessitsch A."/>
        </authorList>
    </citation>
    <scope>NUCLEOTIDE SEQUENCE [LARGE SCALE GENOMIC DNA]</scope>
    <source>
        <strain>DSM 17436 / LMG 22146 / PsJN</strain>
    </source>
</reference>
<protein>
    <recommendedName>
        <fullName evidence="1">NADPH-dependent 7-cyano-7-deazaguanine reductase</fullName>
        <ecNumber evidence="1">1.7.1.13</ecNumber>
    </recommendedName>
    <alternativeName>
        <fullName evidence="1">7-cyano-7-carbaguanine reductase</fullName>
    </alternativeName>
    <alternativeName>
        <fullName evidence="1">NADPH-dependent nitrile oxidoreductase</fullName>
    </alternativeName>
    <alternativeName>
        <fullName evidence="1">PreQ(0) reductase</fullName>
    </alternativeName>
</protein>
<sequence>MTPEQSPLGKPSAYTEQYDASLLFPIARKNAREAIGIGAQLPFFGTDIWNAYELSWLNARGKPQIAVATFFVPADSPNIVESKSFKLYLGSFAQTAFESMETVRDTIKRDVSASCGATVSVHLTAPYEFGKLQMEEFEGLSLDRLDLDTDVYHPDASLLTAALDEAPVEETLVSNLLKSNCPVTGQPDWGSVQIHYVGPQIDHAGLLRYIISYRNHTGFHEQCVEKIFLDVLKACKPVKLAVYARYTRRGGLDINPFRTNYNLPMPDNMRLARQ</sequence>
<accession>B2SX29</accession>
<organism>
    <name type="scientific">Paraburkholderia phytofirmans (strain DSM 17436 / LMG 22146 / PsJN)</name>
    <name type="common">Burkholderia phytofirmans</name>
    <dbReference type="NCBI Taxonomy" id="398527"/>
    <lineage>
        <taxon>Bacteria</taxon>
        <taxon>Pseudomonadati</taxon>
        <taxon>Pseudomonadota</taxon>
        <taxon>Betaproteobacteria</taxon>
        <taxon>Burkholderiales</taxon>
        <taxon>Burkholderiaceae</taxon>
        <taxon>Paraburkholderia</taxon>
    </lineage>
</organism>
<proteinExistence type="inferred from homology"/>